<organismHost>
    <name type="scientific">Escherichia coli</name>
    <dbReference type="NCBI Taxonomy" id="562"/>
</organismHost>
<comment type="function">
    <text evidence="3">Large subunit of the DNA topoisomerase that untwists superhelical DNA. Controls of topological states of double-stranded DNA by transient breakage and subsequent rejoining of DNA strands.</text>
</comment>
<comment type="catalytic activity">
    <reaction evidence="3">
        <text>ATP-dependent breakage, passage and rejoining of double-stranded DNA.</text>
        <dbReference type="EC" id="5.6.2.2"/>
    </reaction>
</comment>
<comment type="cofactor">
    <cofactor evidence="3">
        <name>Mg(2+)</name>
        <dbReference type="ChEBI" id="CHEBI:18420"/>
    </cofactor>
</comment>
<comment type="subunit">
    <text evidence="3">Part of the DNA topoisomerase complex made of gp39, gp52 and gp60.</text>
</comment>
<comment type="miscellaneous">
    <text>Binds both single and double-stranded DNA.</text>
</comment>
<comment type="similarity">
    <text evidence="4">Belongs to the type II topoisomerase family.</text>
</comment>
<reference key="1">
    <citation type="journal article" date="1986" name="Nucleic Acids Res.">
        <title>Nucleotide sequence of a type II DNA topoisomerase gene. Bacteriophage T4 gene 39.</title>
        <authorList>
            <person name="Huang W.M."/>
        </authorList>
    </citation>
    <scope>NUCLEOTIDE SEQUENCE [GENOMIC DNA]</scope>
    <scope>PROTEIN SEQUENCE OF 1-15</scope>
</reference>
<reference key="2">
    <citation type="submission" date="1995-03" db="EMBL/GenBank/DDBJ databases">
        <authorList>
            <person name="Huang W.M."/>
        </authorList>
    </citation>
    <scope>SEQUENCE REVISION</scope>
</reference>
<reference key="3">
    <citation type="journal article" date="2003" name="Microbiol. Mol. Biol. Rev.">
        <title>Bacteriophage T4 genome.</title>
        <authorList>
            <person name="Miller E.S."/>
            <person name="Kutter E."/>
            <person name="Mosig G."/>
            <person name="Arisaka F."/>
            <person name="Kunisawa T."/>
            <person name="Ruger W."/>
        </authorList>
    </citation>
    <scope>NUCLEOTIDE SEQUENCE [LARGE SCALE GENOMIC DNA]</scope>
</reference>
<reference key="4">
    <citation type="journal article" date="1979" name="Proc. Natl. Acad. Sci. U.S.A.">
        <title>T4 DNA-delay proteins, required for specific DNA replication, form a complex that has ATP-dependent DNA topoisomerase activity.</title>
        <authorList>
            <person name="Stetler G.L."/>
            <person name="King G.J."/>
            <person name="Huang W.M."/>
        </authorList>
    </citation>
    <scope>IDENTIFICATION IN THE DNA TOPOISOMERASE COMPLEX</scope>
    <scope>CATALYTIC ACTIVITY</scope>
    <scope>FUNCTION</scope>
</reference>
<reference key="5">
    <citation type="journal article" date="1983" name="J. Biol. Chem.">
        <title>Identification of bacteriophage T4 gene 60 product and a role for this protein in DNA topoisomerase.</title>
        <authorList>
            <person name="Seasholtz A.F."/>
            <person name="Greenberg G.R."/>
        </authorList>
    </citation>
    <scope>IDENTIFICATION IN THE DNA TOPOISOMERASE COMPLEX</scope>
</reference>
<accession>P09176</accession>
<protein>
    <recommendedName>
        <fullName>DNA topoisomerase large subunit</fullName>
        <ecNumber evidence="3">5.6.2.2</ecNumber>
    </recommendedName>
    <alternativeName>
        <fullName>DNA topoisomerase 64-kDa subunit</fullName>
    </alternativeName>
    <alternativeName>
        <fullName>Protein Gp39</fullName>
    </alternativeName>
</protein>
<feature type="chain" id="PRO_0000145392" description="DNA topoisomerase large subunit">
    <location>
        <begin position="1"/>
        <end position="516"/>
    </location>
</feature>
<feature type="DNA-binding region" evidence="2">
    <location>
        <begin position="369"/>
        <end position="400"/>
    </location>
</feature>
<feature type="binding site" evidence="1">
    <location>
        <begin position="128"/>
        <end position="136"/>
    </location>
    <ligand>
        <name>ATP</name>
        <dbReference type="ChEBI" id="CHEBI:30616"/>
    </ligand>
</feature>
<sequence>MIKNEIKILSDIEHIKKRSGMYIGSSANETHERFMFGKWESVQYVPGLVKLIDEIIDNSVDEGIRTKFKFANKINVTIKNNQVTVEDNGRGIPQAMVKTPTGEEIPGPVAAWTIPKAGGNFGDDKERVTGGMNGVGSSLTNIFSVMFVGETGDGQNNIVVRCSNGMENKSWEDIPGKWKGTRVTFIPDFMSFETNELSQVYLDITLDRLQTLAVVYPDIQFTFNGKKVQGNFKKYARQYDEHAIVQEQENCSIAVGRSPDGFRQLTYVNNIHTKNGGHHIDCAMDDICEDLIPQIKRKFKIDVTKARVKECLTIVMFVRDMKNMRLIRQTKERLTSPFGEIRSHIQLDAKKISRDILNNEAILMPIIEAALARKLAAEKAAETKAAKKASKAKVHKHIKANLCGKDADTTLFLTEGDSAIGYLIDVRDKELHGGYPLRGKVLNSWGMSYADMLKNKELFDICAITGLVLGEKAFEEKEDGEWFTFELNGDTIIVNENDEVQINGKWITVGELRKNL</sequence>
<gene>
    <name type="primary">39</name>
</gene>
<name>TOPL_BPT4</name>
<organism>
    <name type="scientific">Enterobacteria phage T4</name>
    <name type="common">Bacteriophage T4</name>
    <dbReference type="NCBI Taxonomy" id="10665"/>
    <lineage>
        <taxon>Viruses</taxon>
        <taxon>Duplodnaviria</taxon>
        <taxon>Heunggongvirae</taxon>
        <taxon>Uroviricota</taxon>
        <taxon>Caudoviricetes</taxon>
        <taxon>Straboviridae</taxon>
        <taxon>Tevenvirinae</taxon>
        <taxon>Tequatrovirus</taxon>
    </lineage>
</organism>
<keyword id="KW-0002">3D-structure</keyword>
<keyword id="KW-0067">ATP-binding</keyword>
<keyword id="KW-0903">Direct protein sequencing</keyword>
<keyword id="KW-0238">DNA-binding</keyword>
<keyword id="KW-0413">Isomerase</keyword>
<keyword id="KW-0547">Nucleotide-binding</keyword>
<keyword id="KW-1185">Reference proteome</keyword>
<keyword id="KW-0799">Topoisomerase</keyword>
<dbReference type="EC" id="5.6.2.2" evidence="3"/>
<dbReference type="EMBL" id="X06220">
    <property type="protein sequence ID" value="CAA29569.1"/>
    <property type="molecule type" value="Genomic_DNA"/>
</dbReference>
<dbReference type="EMBL" id="AF158101">
    <property type="protein sequence ID" value="AAD42462.1"/>
    <property type="molecule type" value="Genomic_DNA"/>
</dbReference>
<dbReference type="PIR" id="A25763">
    <property type="entry name" value="ISBPT4"/>
</dbReference>
<dbReference type="RefSeq" id="NP_049621.1">
    <property type="nucleotide sequence ID" value="NC_000866.4"/>
</dbReference>
<dbReference type="PDB" id="8YO3">
    <property type="method" value="EM"/>
    <property type="resolution" value="3.62 A"/>
    <property type="chains" value="C/D=1-516"/>
</dbReference>
<dbReference type="PDB" id="8YO4">
    <property type="method" value="EM"/>
    <property type="resolution" value="3.20 A"/>
    <property type="chains" value="C/D=1-516"/>
</dbReference>
<dbReference type="PDBsum" id="8YO3"/>
<dbReference type="PDBsum" id="8YO4"/>
<dbReference type="SMR" id="P09176"/>
<dbReference type="GeneID" id="1258807"/>
<dbReference type="KEGG" id="vg:1258807"/>
<dbReference type="OrthoDB" id="931at10239"/>
<dbReference type="Proteomes" id="UP000009087">
    <property type="component" value="Segment"/>
</dbReference>
<dbReference type="GO" id="GO:0032991">
    <property type="term" value="C:protein-containing complex"/>
    <property type="evidence" value="ECO:0000314"/>
    <property type="project" value="UniProtKB"/>
</dbReference>
<dbReference type="GO" id="GO:0005524">
    <property type="term" value="F:ATP binding"/>
    <property type="evidence" value="ECO:0007669"/>
    <property type="project" value="UniProtKB-KW"/>
</dbReference>
<dbReference type="GO" id="GO:0003677">
    <property type="term" value="F:DNA binding"/>
    <property type="evidence" value="ECO:0007669"/>
    <property type="project" value="UniProtKB-KW"/>
</dbReference>
<dbReference type="GO" id="GO:0003918">
    <property type="term" value="F:DNA topoisomerase type II (double strand cut, ATP-hydrolyzing) activity"/>
    <property type="evidence" value="ECO:0007669"/>
    <property type="project" value="UniProtKB-EC"/>
</dbReference>
<dbReference type="GO" id="GO:0006265">
    <property type="term" value="P:DNA topological change"/>
    <property type="evidence" value="ECO:0007669"/>
    <property type="project" value="InterPro"/>
</dbReference>
<dbReference type="GO" id="GO:0000819">
    <property type="term" value="P:sister chromatid segregation"/>
    <property type="evidence" value="ECO:0007669"/>
    <property type="project" value="TreeGrafter"/>
</dbReference>
<dbReference type="Gene3D" id="3.30.230.10">
    <property type="match status" value="1"/>
</dbReference>
<dbReference type="Gene3D" id="3.40.50.670">
    <property type="match status" value="1"/>
</dbReference>
<dbReference type="Gene3D" id="3.30.565.10">
    <property type="entry name" value="Histidine kinase-like ATPase, C-terminal domain"/>
    <property type="match status" value="1"/>
</dbReference>
<dbReference type="InterPro" id="IPR050634">
    <property type="entry name" value="DNA_Topoisomerase_II"/>
</dbReference>
<dbReference type="InterPro" id="IPR036890">
    <property type="entry name" value="HATPase_C_sf"/>
</dbReference>
<dbReference type="InterPro" id="IPR020568">
    <property type="entry name" value="Ribosomal_Su5_D2-typ_SF"/>
</dbReference>
<dbReference type="InterPro" id="IPR014721">
    <property type="entry name" value="Ribsml_uS5_D2-typ_fold_subgr"/>
</dbReference>
<dbReference type="InterPro" id="IPR001241">
    <property type="entry name" value="Topo_IIA"/>
</dbReference>
<dbReference type="InterPro" id="IPR013760">
    <property type="entry name" value="Topo_IIA-like_dom_sf"/>
</dbReference>
<dbReference type="InterPro" id="IPR013759">
    <property type="entry name" value="Topo_IIA_B_C"/>
</dbReference>
<dbReference type="InterPro" id="IPR013506">
    <property type="entry name" value="Topo_IIA_bsu_dom2"/>
</dbReference>
<dbReference type="InterPro" id="IPR018522">
    <property type="entry name" value="TopoIIA_CS"/>
</dbReference>
<dbReference type="PANTHER" id="PTHR10169:SF38">
    <property type="entry name" value="DNA TOPOISOMERASE 2"/>
    <property type="match status" value="1"/>
</dbReference>
<dbReference type="PANTHER" id="PTHR10169">
    <property type="entry name" value="DNA TOPOISOMERASE/GYRASE"/>
    <property type="match status" value="1"/>
</dbReference>
<dbReference type="Pfam" id="PF00204">
    <property type="entry name" value="DNA_gyraseB"/>
    <property type="match status" value="1"/>
</dbReference>
<dbReference type="Pfam" id="PF02518">
    <property type="entry name" value="HATPase_c"/>
    <property type="match status" value="1"/>
</dbReference>
<dbReference type="PRINTS" id="PR00418">
    <property type="entry name" value="TPI2FAMILY"/>
</dbReference>
<dbReference type="SMART" id="SM00387">
    <property type="entry name" value="HATPase_c"/>
    <property type="match status" value="1"/>
</dbReference>
<dbReference type="SMART" id="SM00433">
    <property type="entry name" value="TOP2c"/>
    <property type="match status" value="1"/>
</dbReference>
<dbReference type="SUPFAM" id="SSF55874">
    <property type="entry name" value="ATPase domain of HSP90 chaperone/DNA topoisomerase II/histidine kinase"/>
    <property type="match status" value="1"/>
</dbReference>
<dbReference type="SUPFAM" id="SSF54211">
    <property type="entry name" value="Ribosomal protein S5 domain 2-like"/>
    <property type="match status" value="1"/>
</dbReference>
<dbReference type="SUPFAM" id="SSF56719">
    <property type="entry name" value="Type II DNA topoisomerase"/>
    <property type="match status" value="1"/>
</dbReference>
<dbReference type="PROSITE" id="PS00177">
    <property type="entry name" value="TOPOISOMERASE_II"/>
    <property type="match status" value="1"/>
</dbReference>
<evidence type="ECO:0000250" key="1"/>
<evidence type="ECO:0000255" key="2"/>
<evidence type="ECO:0000269" key="3">
    <source>
    </source>
</evidence>
<evidence type="ECO:0000305" key="4"/>
<proteinExistence type="evidence at protein level"/>